<sequence length="394" mass="43391">MIRKERAILALEDGTVYRGYAFGHRGETVGEVVFNTSMTGYQEIMTDPSYNGQIVTITYPHVGNYGVAIYDMESNKPYVRGFIAREFSGEYSNHRAQQSLEAFMQQYGVVSIQGIDTRALVRRLRTGGVVKGVIAHRSYTHPEDPYGEFTPAEEQIYVQRARDHQDIDGHDMTKEVTTPLPYAFPTLRHGKRVVLMDFGIKHTIIERLAEVGIEPIVVPAHTTPAQIMALQPHGLFLSNGPGDPAPLEYAHKTAWELMGLLPTFGICLGHQILGLAAGGQTFKMKFGHRGGNQPVKNLLTGNVEITSQNHGYAVDIASIPDGAFVATHVNLNDGTLEGMAHSRYPVFSVQYHPEASPGPHDSRYLFDRFIEEIDAFEGANGSPVLKASAGRLGV</sequence>
<evidence type="ECO:0000255" key="1">
    <source>
        <dbReference type="HAMAP-Rule" id="MF_01209"/>
    </source>
</evidence>
<protein>
    <recommendedName>
        <fullName evidence="1">Carbamoyl phosphate synthase small chain</fullName>
        <ecNumber evidence="1">6.3.5.5</ecNumber>
    </recommendedName>
    <alternativeName>
        <fullName evidence="1">Carbamoyl phosphate synthetase glutamine chain</fullName>
    </alternativeName>
</protein>
<accession>Q1IWN0</accession>
<dbReference type="EC" id="6.3.5.5" evidence="1"/>
<dbReference type="EMBL" id="CP000359">
    <property type="protein sequence ID" value="ABF46354.1"/>
    <property type="molecule type" value="Genomic_DNA"/>
</dbReference>
<dbReference type="RefSeq" id="WP_011531180.1">
    <property type="nucleotide sequence ID" value="NC_008025.1"/>
</dbReference>
<dbReference type="SMR" id="Q1IWN0"/>
<dbReference type="STRING" id="319795.Dgeo_2060"/>
<dbReference type="KEGG" id="dge:Dgeo_2060"/>
<dbReference type="eggNOG" id="COG0505">
    <property type="taxonomic scope" value="Bacteria"/>
</dbReference>
<dbReference type="HOGENOM" id="CLU_035901_2_1_0"/>
<dbReference type="UniPathway" id="UPA00068">
    <property type="reaction ID" value="UER00171"/>
</dbReference>
<dbReference type="UniPathway" id="UPA00070">
    <property type="reaction ID" value="UER00115"/>
</dbReference>
<dbReference type="Proteomes" id="UP000002431">
    <property type="component" value="Chromosome"/>
</dbReference>
<dbReference type="GO" id="GO:0005524">
    <property type="term" value="F:ATP binding"/>
    <property type="evidence" value="ECO:0007669"/>
    <property type="project" value="UniProtKB-UniRule"/>
</dbReference>
<dbReference type="GO" id="GO:0004088">
    <property type="term" value="F:carbamoyl-phosphate synthase (glutamine-hydrolyzing) activity"/>
    <property type="evidence" value="ECO:0007669"/>
    <property type="project" value="UniProtKB-UniRule"/>
</dbReference>
<dbReference type="GO" id="GO:0004359">
    <property type="term" value="F:glutaminase activity"/>
    <property type="evidence" value="ECO:0007669"/>
    <property type="project" value="RHEA"/>
</dbReference>
<dbReference type="GO" id="GO:0006207">
    <property type="term" value="P:'de novo' pyrimidine nucleobase biosynthetic process"/>
    <property type="evidence" value="ECO:0007669"/>
    <property type="project" value="InterPro"/>
</dbReference>
<dbReference type="GO" id="GO:0044205">
    <property type="term" value="P:'de novo' UMP biosynthetic process"/>
    <property type="evidence" value="ECO:0007669"/>
    <property type="project" value="UniProtKB-UniRule"/>
</dbReference>
<dbReference type="GO" id="GO:0006541">
    <property type="term" value="P:glutamine metabolic process"/>
    <property type="evidence" value="ECO:0007669"/>
    <property type="project" value="InterPro"/>
</dbReference>
<dbReference type="GO" id="GO:0006526">
    <property type="term" value="P:L-arginine biosynthetic process"/>
    <property type="evidence" value="ECO:0007669"/>
    <property type="project" value="UniProtKB-UniRule"/>
</dbReference>
<dbReference type="CDD" id="cd01744">
    <property type="entry name" value="GATase1_CPSase"/>
    <property type="match status" value="1"/>
</dbReference>
<dbReference type="FunFam" id="3.40.50.880:FF:000075">
    <property type="entry name" value="Carbamoyl-phosphate synthase small chain"/>
    <property type="match status" value="1"/>
</dbReference>
<dbReference type="FunFam" id="3.50.30.20:FF:000001">
    <property type="entry name" value="Carbamoyl-phosphate synthase small chain"/>
    <property type="match status" value="1"/>
</dbReference>
<dbReference type="Gene3D" id="3.40.50.880">
    <property type="match status" value="1"/>
</dbReference>
<dbReference type="Gene3D" id="3.50.30.20">
    <property type="entry name" value="Carbamoyl-phosphate synthase small subunit, N-terminal domain"/>
    <property type="match status" value="1"/>
</dbReference>
<dbReference type="HAMAP" id="MF_01209">
    <property type="entry name" value="CPSase_S_chain"/>
    <property type="match status" value="1"/>
</dbReference>
<dbReference type="InterPro" id="IPR050472">
    <property type="entry name" value="Anth_synth/Amidotransfase"/>
</dbReference>
<dbReference type="InterPro" id="IPR006274">
    <property type="entry name" value="CarbamoylP_synth_ssu"/>
</dbReference>
<dbReference type="InterPro" id="IPR002474">
    <property type="entry name" value="CarbamoylP_synth_ssu_N"/>
</dbReference>
<dbReference type="InterPro" id="IPR036480">
    <property type="entry name" value="CarbP_synth_ssu_N_sf"/>
</dbReference>
<dbReference type="InterPro" id="IPR029062">
    <property type="entry name" value="Class_I_gatase-like"/>
</dbReference>
<dbReference type="InterPro" id="IPR035686">
    <property type="entry name" value="CPSase_GATase1"/>
</dbReference>
<dbReference type="InterPro" id="IPR017926">
    <property type="entry name" value="GATASE"/>
</dbReference>
<dbReference type="NCBIfam" id="TIGR01368">
    <property type="entry name" value="CPSaseIIsmall"/>
    <property type="match status" value="1"/>
</dbReference>
<dbReference type="NCBIfam" id="NF009475">
    <property type="entry name" value="PRK12838.1"/>
    <property type="match status" value="1"/>
</dbReference>
<dbReference type="PANTHER" id="PTHR43418:SF7">
    <property type="entry name" value="CARBAMOYL-PHOSPHATE SYNTHASE SMALL CHAIN"/>
    <property type="match status" value="1"/>
</dbReference>
<dbReference type="PANTHER" id="PTHR43418">
    <property type="entry name" value="MULTIFUNCTIONAL TRYPTOPHAN BIOSYNTHESIS PROTEIN-RELATED"/>
    <property type="match status" value="1"/>
</dbReference>
<dbReference type="Pfam" id="PF00988">
    <property type="entry name" value="CPSase_sm_chain"/>
    <property type="match status" value="1"/>
</dbReference>
<dbReference type="Pfam" id="PF00117">
    <property type="entry name" value="GATase"/>
    <property type="match status" value="1"/>
</dbReference>
<dbReference type="PRINTS" id="PR00097">
    <property type="entry name" value="ANTSNTHASEII"/>
</dbReference>
<dbReference type="PRINTS" id="PR00099">
    <property type="entry name" value="CPSGATASE"/>
</dbReference>
<dbReference type="PRINTS" id="PR00096">
    <property type="entry name" value="GATASE"/>
</dbReference>
<dbReference type="SMART" id="SM01097">
    <property type="entry name" value="CPSase_sm_chain"/>
    <property type="match status" value="1"/>
</dbReference>
<dbReference type="SUPFAM" id="SSF52021">
    <property type="entry name" value="Carbamoyl phosphate synthetase, small subunit N-terminal domain"/>
    <property type="match status" value="1"/>
</dbReference>
<dbReference type="SUPFAM" id="SSF52317">
    <property type="entry name" value="Class I glutamine amidotransferase-like"/>
    <property type="match status" value="1"/>
</dbReference>
<dbReference type="PROSITE" id="PS51273">
    <property type="entry name" value="GATASE_TYPE_1"/>
    <property type="match status" value="1"/>
</dbReference>
<keyword id="KW-0028">Amino-acid biosynthesis</keyword>
<keyword id="KW-0055">Arginine biosynthesis</keyword>
<keyword id="KW-0067">ATP-binding</keyword>
<keyword id="KW-0315">Glutamine amidotransferase</keyword>
<keyword id="KW-0436">Ligase</keyword>
<keyword id="KW-0547">Nucleotide-binding</keyword>
<keyword id="KW-0665">Pyrimidine biosynthesis</keyword>
<reference key="1">
    <citation type="submission" date="2006-04" db="EMBL/GenBank/DDBJ databases">
        <title>Complete sequence of chromosome of Deinococcus geothermalis DSM 11300.</title>
        <authorList>
            <person name="Copeland A."/>
            <person name="Lucas S."/>
            <person name="Lapidus A."/>
            <person name="Barry K."/>
            <person name="Detter J.C."/>
            <person name="Glavina del Rio T."/>
            <person name="Hammon N."/>
            <person name="Israni S."/>
            <person name="Dalin E."/>
            <person name="Tice H."/>
            <person name="Pitluck S."/>
            <person name="Brettin T."/>
            <person name="Bruce D."/>
            <person name="Han C."/>
            <person name="Tapia R."/>
            <person name="Saunders E."/>
            <person name="Gilna P."/>
            <person name="Schmutz J."/>
            <person name="Larimer F."/>
            <person name="Land M."/>
            <person name="Hauser L."/>
            <person name="Kyrpides N."/>
            <person name="Kim E."/>
            <person name="Daly M.J."/>
            <person name="Fredrickson J.K."/>
            <person name="Makarova K.S."/>
            <person name="Gaidamakova E.K."/>
            <person name="Zhai M."/>
            <person name="Richardson P."/>
        </authorList>
    </citation>
    <scope>NUCLEOTIDE SEQUENCE [LARGE SCALE GENOMIC DNA]</scope>
    <source>
        <strain>DSM 11300 / CIP 105573 / AG-3a</strain>
    </source>
</reference>
<name>CARA_DEIGD</name>
<proteinExistence type="inferred from homology"/>
<comment type="function">
    <text evidence="1">Small subunit of the glutamine-dependent carbamoyl phosphate synthetase (CPSase). CPSase catalyzes the formation of carbamoyl phosphate from the ammonia moiety of glutamine, carbonate, and phosphate donated by ATP, constituting the first step of 2 biosynthetic pathways, one leading to arginine and/or urea and the other to pyrimidine nucleotides. The small subunit (glutamine amidotransferase) binds and cleaves glutamine to supply the large subunit with the substrate ammonia.</text>
</comment>
<comment type="catalytic activity">
    <reaction evidence="1">
        <text>hydrogencarbonate + L-glutamine + 2 ATP + H2O = carbamoyl phosphate + L-glutamate + 2 ADP + phosphate + 2 H(+)</text>
        <dbReference type="Rhea" id="RHEA:18633"/>
        <dbReference type="ChEBI" id="CHEBI:15377"/>
        <dbReference type="ChEBI" id="CHEBI:15378"/>
        <dbReference type="ChEBI" id="CHEBI:17544"/>
        <dbReference type="ChEBI" id="CHEBI:29985"/>
        <dbReference type="ChEBI" id="CHEBI:30616"/>
        <dbReference type="ChEBI" id="CHEBI:43474"/>
        <dbReference type="ChEBI" id="CHEBI:58228"/>
        <dbReference type="ChEBI" id="CHEBI:58359"/>
        <dbReference type="ChEBI" id="CHEBI:456216"/>
        <dbReference type="EC" id="6.3.5.5"/>
    </reaction>
</comment>
<comment type="catalytic activity">
    <molecule>Carbamoyl phosphate synthase small chain</molecule>
    <reaction evidence="1">
        <text>L-glutamine + H2O = L-glutamate + NH4(+)</text>
        <dbReference type="Rhea" id="RHEA:15889"/>
        <dbReference type="ChEBI" id="CHEBI:15377"/>
        <dbReference type="ChEBI" id="CHEBI:28938"/>
        <dbReference type="ChEBI" id="CHEBI:29985"/>
        <dbReference type="ChEBI" id="CHEBI:58359"/>
    </reaction>
</comment>
<comment type="pathway">
    <text evidence="1">Amino-acid biosynthesis; L-arginine biosynthesis; carbamoyl phosphate from bicarbonate: step 1/1.</text>
</comment>
<comment type="pathway">
    <text evidence="1">Pyrimidine metabolism; UMP biosynthesis via de novo pathway; (S)-dihydroorotate from bicarbonate: step 1/3.</text>
</comment>
<comment type="subunit">
    <text evidence="1">Composed of two chains; the small (or glutamine) chain promotes the hydrolysis of glutamine to ammonia, which is used by the large (or ammonia) chain to synthesize carbamoyl phosphate. Tetramer of heterodimers (alpha,beta)4.</text>
</comment>
<comment type="similarity">
    <text evidence="1">Belongs to the CarA family.</text>
</comment>
<gene>
    <name evidence="1" type="primary">carA</name>
    <name type="ordered locus">Dgeo_2060</name>
</gene>
<feature type="chain" id="PRO_1000138858" description="Carbamoyl phosphate synthase small chain">
    <location>
        <begin position="1"/>
        <end position="394"/>
    </location>
</feature>
<feature type="domain" description="Glutamine amidotransferase type-1" evidence="1">
    <location>
        <begin position="192"/>
        <end position="379"/>
    </location>
</feature>
<feature type="region of interest" description="CPSase" evidence="1">
    <location>
        <begin position="1"/>
        <end position="188"/>
    </location>
</feature>
<feature type="active site" description="Nucleophile" evidence="1">
    <location>
        <position position="267"/>
    </location>
</feature>
<feature type="active site" evidence="1">
    <location>
        <position position="352"/>
    </location>
</feature>
<feature type="active site" evidence="1">
    <location>
        <position position="354"/>
    </location>
</feature>
<feature type="binding site" evidence="1">
    <location>
        <position position="49"/>
    </location>
    <ligand>
        <name>L-glutamine</name>
        <dbReference type="ChEBI" id="CHEBI:58359"/>
    </ligand>
</feature>
<feature type="binding site" evidence="1">
    <location>
        <position position="240"/>
    </location>
    <ligand>
        <name>L-glutamine</name>
        <dbReference type="ChEBI" id="CHEBI:58359"/>
    </ligand>
</feature>
<feature type="binding site" evidence="1">
    <location>
        <position position="242"/>
    </location>
    <ligand>
        <name>L-glutamine</name>
        <dbReference type="ChEBI" id="CHEBI:58359"/>
    </ligand>
</feature>
<feature type="binding site" evidence="1">
    <location>
        <position position="268"/>
    </location>
    <ligand>
        <name>L-glutamine</name>
        <dbReference type="ChEBI" id="CHEBI:58359"/>
    </ligand>
</feature>
<feature type="binding site" evidence="1">
    <location>
        <position position="271"/>
    </location>
    <ligand>
        <name>L-glutamine</name>
        <dbReference type="ChEBI" id="CHEBI:58359"/>
    </ligand>
</feature>
<feature type="binding site" evidence="1">
    <location>
        <position position="309"/>
    </location>
    <ligand>
        <name>L-glutamine</name>
        <dbReference type="ChEBI" id="CHEBI:58359"/>
    </ligand>
</feature>
<feature type="binding site" evidence="1">
    <location>
        <position position="311"/>
    </location>
    <ligand>
        <name>L-glutamine</name>
        <dbReference type="ChEBI" id="CHEBI:58359"/>
    </ligand>
</feature>
<feature type="binding site" evidence="1">
    <location>
        <position position="312"/>
    </location>
    <ligand>
        <name>L-glutamine</name>
        <dbReference type="ChEBI" id="CHEBI:58359"/>
    </ligand>
</feature>
<organism>
    <name type="scientific">Deinococcus geothermalis (strain DSM 11300 / CIP 105573 / AG-3a)</name>
    <dbReference type="NCBI Taxonomy" id="319795"/>
    <lineage>
        <taxon>Bacteria</taxon>
        <taxon>Thermotogati</taxon>
        <taxon>Deinococcota</taxon>
        <taxon>Deinococci</taxon>
        <taxon>Deinococcales</taxon>
        <taxon>Deinococcaceae</taxon>
        <taxon>Deinococcus</taxon>
    </lineage>
</organism>